<accession>Q89AL9</accession>
<gene>
    <name type="ordered locus">bbp_248</name>
</gene>
<name>Y248_BUCBP</name>
<feature type="chain" id="PRO_0000156909" description="UPF0056 membrane protein bbp_248">
    <location>
        <begin position="1"/>
        <end position="215"/>
    </location>
</feature>
<feature type="transmembrane region" description="Helical" evidence="1">
    <location>
        <begin position="10"/>
        <end position="32"/>
    </location>
</feature>
<feature type="transmembrane region" description="Helical" evidence="1">
    <location>
        <begin position="52"/>
        <end position="74"/>
    </location>
</feature>
<feature type="transmembrane region" description="Helical" evidence="1">
    <location>
        <begin position="78"/>
        <end position="100"/>
    </location>
</feature>
<feature type="transmembrane region" description="Helical" evidence="1">
    <location>
        <begin position="119"/>
        <end position="141"/>
    </location>
</feature>
<feature type="transmembrane region" description="Helical" evidence="1">
    <location>
        <begin position="151"/>
        <end position="169"/>
    </location>
</feature>
<feature type="transmembrane region" description="Helical" evidence="1">
    <location>
        <begin position="190"/>
        <end position="207"/>
    </location>
</feature>
<dbReference type="EMBL" id="AE016826">
    <property type="protein sequence ID" value="AAO26975.1"/>
    <property type="molecule type" value="Genomic_DNA"/>
</dbReference>
<dbReference type="RefSeq" id="WP_011091376.1">
    <property type="nucleotide sequence ID" value="NC_004545.1"/>
</dbReference>
<dbReference type="STRING" id="224915.bbp_248"/>
<dbReference type="KEGG" id="bab:bbp_248"/>
<dbReference type="eggNOG" id="COG2095">
    <property type="taxonomic scope" value="Bacteria"/>
</dbReference>
<dbReference type="HOGENOM" id="CLU_079909_2_1_6"/>
<dbReference type="OrthoDB" id="21094at2"/>
<dbReference type="Proteomes" id="UP000000601">
    <property type="component" value="Chromosome"/>
</dbReference>
<dbReference type="GO" id="GO:0005886">
    <property type="term" value="C:plasma membrane"/>
    <property type="evidence" value="ECO:0007669"/>
    <property type="project" value="UniProtKB-SubCell"/>
</dbReference>
<dbReference type="InterPro" id="IPR002771">
    <property type="entry name" value="Multi_antbiot-R_MarC"/>
</dbReference>
<dbReference type="NCBIfam" id="TIGR00427">
    <property type="entry name" value="NAAT family transporter"/>
    <property type="match status" value="1"/>
</dbReference>
<dbReference type="NCBIfam" id="NF008320">
    <property type="entry name" value="PRK11111.1"/>
    <property type="match status" value="1"/>
</dbReference>
<dbReference type="PANTHER" id="PTHR33508">
    <property type="entry name" value="UPF0056 MEMBRANE PROTEIN YHCE"/>
    <property type="match status" value="1"/>
</dbReference>
<dbReference type="PANTHER" id="PTHR33508:SF1">
    <property type="entry name" value="UPF0056 MEMBRANE PROTEIN YHCE"/>
    <property type="match status" value="1"/>
</dbReference>
<dbReference type="Pfam" id="PF01914">
    <property type="entry name" value="MarC"/>
    <property type="match status" value="1"/>
</dbReference>
<evidence type="ECO:0000255" key="1"/>
<evidence type="ECO:0000305" key="2"/>
<organism>
    <name type="scientific">Buchnera aphidicola subsp. Baizongia pistaciae (strain Bp)</name>
    <dbReference type="NCBI Taxonomy" id="224915"/>
    <lineage>
        <taxon>Bacteria</taxon>
        <taxon>Pseudomonadati</taxon>
        <taxon>Pseudomonadota</taxon>
        <taxon>Gammaproteobacteria</taxon>
        <taxon>Enterobacterales</taxon>
        <taxon>Erwiniaceae</taxon>
        <taxon>Buchnera</taxon>
    </lineage>
</organism>
<protein>
    <recommendedName>
        <fullName>UPF0056 membrane protein bbp_248</fullName>
    </recommendedName>
</protein>
<reference key="1">
    <citation type="journal article" date="2003" name="Proc. Natl. Acad. Sci. U.S.A.">
        <title>Reductive genome evolution in Buchnera aphidicola.</title>
        <authorList>
            <person name="van Ham R.C.H.J."/>
            <person name="Kamerbeek J."/>
            <person name="Palacios C."/>
            <person name="Rausell C."/>
            <person name="Abascal F."/>
            <person name="Bastolla U."/>
            <person name="Fernandez J.M."/>
            <person name="Jimenez L."/>
            <person name="Postigo M."/>
            <person name="Silva F.J."/>
            <person name="Tamames J."/>
            <person name="Viguera E."/>
            <person name="Latorre A."/>
            <person name="Valencia A."/>
            <person name="Moran F."/>
            <person name="Moya A."/>
        </authorList>
    </citation>
    <scope>NUCLEOTIDE SEQUENCE [LARGE SCALE GENOMIC DNA]</scope>
    <source>
        <strain>Bp</strain>
    </source>
</reference>
<keyword id="KW-1003">Cell membrane</keyword>
<keyword id="KW-0472">Membrane</keyword>
<keyword id="KW-1185">Reference proteome</keyword>
<keyword id="KW-0812">Transmembrane</keyword>
<keyword id="KW-1133">Transmembrane helix</keyword>
<comment type="subcellular location">
    <subcellularLocation>
        <location evidence="2">Cell membrane</location>
        <topology evidence="2">Multi-pass membrane protein</topology>
    </subcellularLocation>
</comment>
<comment type="similarity">
    <text evidence="2">Belongs to the UPF0056 (MarC) family.</text>
</comment>
<sequence>MNVEMFDFSIYISFFFSLFALVNPIGMIPIFTSMTNHQSIVERNKTNLIANFSVAIILSISLIFGSFILNLFGISINSFRISGGILVMIIAISMINGNFINNINNQKNGKLDKDIARNISIVPLAMPLIAGPGAISSTIVWSTHYSSVENIFGCMVTIMLFSCFCWTLFKVSPIIVDILGRTGINIMTRIMGLLLMSLGIEFILAGLKASCSNYF</sequence>
<proteinExistence type="inferred from homology"/>